<comment type="function">
    <text evidence="1">ATP-dependent serine protease that mediates the selective degradation of mutant and abnormal proteins as well as certain short-lived regulatory proteins. Required for cellular homeostasis and for survival from DNA damage and developmental changes induced by stress. Degrades polypeptides processively to yield small peptide fragments that are 5 to 10 amino acids long. Binds to DNA in a double-stranded, site-specific manner.</text>
</comment>
<comment type="catalytic activity">
    <reaction evidence="1">
        <text>Hydrolysis of proteins in presence of ATP.</text>
        <dbReference type="EC" id="3.4.21.53"/>
    </reaction>
</comment>
<comment type="subunit">
    <text evidence="1">Homohexamer. Organized in a ring with a central cavity.</text>
</comment>
<comment type="subcellular location">
    <subcellularLocation>
        <location evidence="1">Cytoplasm</location>
    </subcellularLocation>
</comment>
<comment type="induction">
    <text evidence="1">By heat shock.</text>
</comment>
<comment type="similarity">
    <text evidence="1">Belongs to the peptidase S16 family.</text>
</comment>
<evidence type="ECO:0000255" key="1">
    <source>
        <dbReference type="HAMAP-Rule" id="MF_01973"/>
    </source>
</evidence>
<evidence type="ECO:0000255" key="2">
    <source>
        <dbReference type="PROSITE-ProRule" id="PRU01122"/>
    </source>
</evidence>
<evidence type="ECO:0000255" key="3">
    <source>
        <dbReference type="PROSITE-ProRule" id="PRU01123"/>
    </source>
</evidence>
<name>LON_RICTY</name>
<gene>
    <name evidence="1" type="primary">lon</name>
    <name type="ordered locus">RT0437</name>
</gene>
<organism>
    <name type="scientific">Rickettsia typhi (strain ATCC VR-144 / Wilmington)</name>
    <dbReference type="NCBI Taxonomy" id="257363"/>
    <lineage>
        <taxon>Bacteria</taxon>
        <taxon>Pseudomonadati</taxon>
        <taxon>Pseudomonadota</taxon>
        <taxon>Alphaproteobacteria</taxon>
        <taxon>Rickettsiales</taxon>
        <taxon>Rickettsiaceae</taxon>
        <taxon>Rickettsieae</taxon>
        <taxon>Rickettsia</taxon>
        <taxon>typhus group</taxon>
    </lineage>
</organism>
<reference key="1">
    <citation type="journal article" date="2004" name="J. Bacteriol.">
        <title>Complete genome sequence of Rickettsia typhi and comparison with sequences of other Rickettsiae.</title>
        <authorList>
            <person name="McLeod M.P."/>
            <person name="Qin X."/>
            <person name="Karpathy S.E."/>
            <person name="Gioia J."/>
            <person name="Highlander S.K."/>
            <person name="Fox G.E."/>
            <person name="McNeill T.Z."/>
            <person name="Jiang H."/>
            <person name="Muzny D."/>
            <person name="Jacob L.S."/>
            <person name="Hawes A.C."/>
            <person name="Sodergren E."/>
            <person name="Gill R."/>
            <person name="Hume J."/>
            <person name="Morgan M."/>
            <person name="Fan G."/>
            <person name="Amin A.G."/>
            <person name="Gibbs R.A."/>
            <person name="Hong C."/>
            <person name="Yu X.-J."/>
            <person name="Walker D.H."/>
            <person name="Weinstock G.M."/>
        </authorList>
    </citation>
    <scope>NUCLEOTIDE SEQUENCE [LARGE SCALE GENOMIC DNA]</scope>
    <source>
        <strain>ATCC VR-144 / Wilmington</strain>
    </source>
</reference>
<dbReference type="EC" id="3.4.21.53" evidence="1"/>
<dbReference type="EMBL" id="AE017197">
    <property type="protein sequence ID" value="AAU03914.1"/>
    <property type="molecule type" value="Genomic_DNA"/>
</dbReference>
<dbReference type="RefSeq" id="WP_011190898.1">
    <property type="nucleotide sequence ID" value="NC_006142.1"/>
</dbReference>
<dbReference type="SMR" id="Q68WS8"/>
<dbReference type="MEROPS" id="S16.001"/>
<dbReference type="KEGG" id="rty:RT0437"/>
<dbReference type="eggNOG" id="COG0466">
    <property type="taxonomic scope" value="Bacteria"/>
</dbReference>
<dbReference type="HOGENOM" id="CLU_004109_4_3_5"/>
<dbReference type="OrthoDB" id="9803599at2"/>
<dbReference type="Proteomes" id="UP000000604">
    <property type="component" value="Chromosome"/>
</dbReference>
<dbReference type="GO" id="GO:0005737">
    <property type="term" value="C:cytoplasm"/>
    <property type="evidence" value="ECO:0007669"/>
    <property type="project" value="UniProtKB-SubCell"/>
</dbReference>
<dbReference type="GO" id="GO:0005524">
    <property type="term" value="F:ATP binding"/>
    <property type="evidence" value="ECO:0007669"/>
    <property type="project" value="UniProtKB-UniRule"/>
</dbReference>
<dbReference type="GO" id="GO:0016887">
    <property type="term" value="F:ATP hydrolysis activity"/>
    <property type="evidence" value="ECO:0007669"/>
    <property type="project" value="UniProtKB-UniRule"/>
</dbReference>
<dbReference type="GO" id="GO:0004176">
    <property type="term" value="F:ATP-dependent peptidase activity"/>
    <property type="evidence" value="ECO:0007669"/>
    <property type="project" value="UniProtKB-UniRule"/>
</dbReference>
<dbReference type="GO" id="GO:0043565">
    <property type="term" value="F:sequence-specific DNA binding"/>
    <property type="evidence" value="ECO:0007669"/>
    <property type="project" value="UniProtKB-UniRule"/>
</dbReference>
<dbReference type="GO" id="GO:0004252">
    <property type="term" value="F:serine-type endopeptidase activity"/>
    <property type="evidence" value="ECO:0007669"/>
    <property type="project" value="UniProtKB-UniRule"/>
</dbReference>
<dbReference type="GO" id="GO:0034605">
    <property type="term" value="P:cellular response to heat"/>
    <property type="evidence" value="ECO:0007669"/>
    <property type="project" value="UniProtKB-UniRule"/>
</dbReference>
<dbReference type="GO" id="GO:0006515">
    <property type="term" value="P:protein quality control for misfolded or incompletely synthesized proteins"/>
    <property type="evidence" value="ECO:0007669"/>
    <property type="project" value="UniProtKB-UniRule"/>
</dbReference>
<dbReference type="CDD" id="cd19500">
    <property type="entry name" value="RecA-like_Lon"/>
    <property type="match status" value="1"/>
</dbReference>
<dbReference type="FunFam" id="1.20.5.5270:FF:000002">
    <property type="entry name" value="Lon protease homolog"/>
    <property type="match status" value="1"/>
</dbReference>
<dbReference type="FunFam" id="3.40.50.300:FF:000021">
    <property type="entry name" value="Lon protease homolog"/>
    <property type="match status" value="1"/>
</dbReference>
<dbReference type="Gene3D" id="1.10.8.60">
    <property type="match status" value="1"/>
</dbReference>
<dbReference type="Gene3D" id="1.20.5.5270">
    <property type="match status" value="1"/>
</dbReference>
<dbReference type="Gene3D" id="1.20.58.1480">
    <property type="match status" value="1"/>
</dbReference>
<dbReference type="Gene3D" id="3.30.230.10">
    <property type="match status" value="1"/>
</dbReference>
<dbReference type="Gene3D" id="2.30.130.40">
    <property type="entry name" value="LON domain-like"/>
    <property type="match status" value="1"/>
</dbReference>
<dbReference type="Gene3D" id="3.40.50.300">
    <property type="entry name" value="P-loop containing nucleotide triphosphate hydrolases"/>
    <property type="match status" value="1"/>
</dbReference>
<dbReference type="HAMAP" id="MF_01973">
    <property type="entry name" value="lon_bact"/>
    <property type="match status" value="1"/>
</dbReference>
<dbReference type="InterPro" id="IPR003593">
    <property type="entry name" value="AAA+_ATPase"/>
</dbReference>
<dbReference type="InterPro" id="IPR003959">
    <property type="entry name" value="ATPase_AAA_core"/>
</dbReference>
<dbReference type="InterPro" id="IPR027543">
    <property type="entry name" value="Lon_bac"/>
</dbReference>
<dbReference type="InterPro" id="IPR004815">
    <property type="entry name" value="Lon_bac/euk-typ"/>
</dbReference>
<dbReference type="InterPro" id="IPR054594">
    <property type="entry name" value="Lon_lid"/>
</dbReference>
<dbReference type="InterPro" id="IPR008269">
    <property type="entry name" value="Lon_proteolytic"/>
</dbReference>
<dbReference type="InterPro" id="IPR027065">
    <property type="entry name" value="Lon_Prtase"/>
</dbReference>
<dbReference type="InterPro" id="IPR003111">
    <property type="entry name" value="Lon_prtase_N"/>
</dbReference>
<dbReference type="InterPro" id="IPR046336">
    <property type="entry name" value="Lon_prtase_N_sf"/>
</dbReference>
<dbReference type="InterPro" id="IPR027417">
    <property type="entry name" value="P-loop_NTPase"/>
</dbReference>
<dbReference type="InterPro" id="IPR008268">
    <property type="entry name" value="Peptidase_S16_AS"/>
</dbReference>
<dbReference type="InterPro" id="IPR015947">
    <property type="entry name" value="PUA-like_sf"/>
</dbReference>
<dbReference type="InterPro" id="IPR020568">
    <property type="entry name" value="Ribosomal_Su5_D2-typ_SF"/>
</dbReference>
<dbReference type="InterPro" id="IPR014721">
    <property type="entry name" value="Ribsml_uS5_D2-typ_fold_subgr"/>
</dbReference>
<dbReference type="NCBIfam" id="TIGR00763">
    <property type="entry name" value="lon"/>
    <property type="match status" value="1"/>
</dbReference>
<dbReference type="NCBIfam" id="NF008053">
    <property type="entry name" value="PRK10787.1"/>
    <property type="match status" value="1"/>
</dbReference>
<dbReference type="PANTHER" id="PTHR10046">
    <property type="entry name" value="ATP DEPENDENT LON PROTEASE FAMILY MEMBER"/>
    <property type="match status" value="1"/>
</dbReference>
<dbReference type="Pfam" id="PF00004">
    <property type="entry name" value="AAA"/>
    <property type="match status" value="1"/>
</dbReference>
<dbReference type="Pfam" id="PF05362">
    <property type="entry name" value="Lon_C"/>
    <property type="match status" value="1"/>
</dbReference>
<dbReference type="Pfam" id="PF22667">
    <property type="entry name" value="Lon_lid"/>
    <property type="match status" value="1"/>
</dbReference>
<dbReference type="Pfam" id="PF02190">
    <property type="entry name" value="LON_substr_bdg"/>
    <property type="match status" value="1"/>
</dbReference>
<dbReference type="PIRSF" id="PIRSF001174">
    <property type="entry name" value="Lon_proteas"/>
    <property type="match status" value="1"/>
</dbReference>
<dbReference type="PRINTS" id="PR00830">
    <property type="entry name" value="ENDOLAPTASE"/>
</dbReference>
<dbReference type="SMART" id="SM00382">
    <property type="entry name" value="AAA"/>
    <property type="match status" value="1"/>
</dbReference>
<dbReference type="SMART" id="SM00464">
    <property type="entry name" value="LON"/>
    <property type="match status" value="1"/>
</dbReference>
<dbReference type="SUPFAM" id="SSF52540">
    <property type="entry name" value="P-loop containing nucleoside triphosphate hydrolases"/>
    <property type="match status" value="1"/>
</dbReference>
<dbReference type="SUPFAM" id="SSF88697">
    <property type="entry name" value="PUA domain-like"/>
    <property type="match status" value="1"/>
</dbReference>
<dbReference type="SUPFAM" id="SSF54211">
    <property type="entry name" value="Ribosomal protein S5 domain 2-like"/>
    <property type="match status" value="1"/>
</dbReference>
<dbReference type="PROSITE" id="PS51787">
    <property type="entry name" value="LON_N"/>
    <property type="match status" value="1"/>
</dbReference>
<dbReference type="PROSITE" id="PS51786">
    <property type="entry name" value="LON_PROTEOLYTIC"/>
    <property type="match status" value="1"/>
</dbReference>
<dbReference type="PROSITE" id="PS01046">
    <property type="entry name" value="LON_SER"/>
    <property type="match status" value="1"/>
</dbReference>
<sequence>MNKKSLPLMALRDMVLFPGVIAPIFVGRKKSLQALSRTTISEENNTKYILVTLQKKFDQENPSKHELYNTAILAKIIQIVKLPNNTAKILIEAVARVKLSDIKDEESFEANYEIIPDEEILDMHNMRSLVDNAVQLFNKYAMNDKKVNTEIIETINKEISNKTNFINIINILASHLITSLETKQQLLEETSPVKRITTVITTLTSNIVNSETEHALQQRVRKQIEKTQRDYYLHEQMKAIQKELDEDKSELADIEKKIKSLKLSKEAKEKAESEFKKLRAMNQMSAESGVTRNYLETLLSLPWGKYDNSKIDINQAEKILNRDHFGLEKVKERIIEYLAVLQRSNKIRGPILCLIGPPGVGKTSLVKSIAEGMGRKYAKFSLGGVRDEAEIRGHRKTYLGSMPGKILGQLKKVKTSNPVMLLDEIDKMSSDFRGDPASALLEVLDPEQNSHFVDHYLEVEYDLSNVVFIATANSHDLPRALSDRMEKIYISGYVEEEKLQIAKNYLVPKQFKVHKIKKDEITISEDAILDLIRYYTKESGVRALEREICALTRKALKQILADNTVKNISIDSNNLEEFLGAKKYNFGLVEKEDQIGSTTGLAYTEVGGELLTIEALAFSGKGEIKTTGKLGDVMKESAMAAYSCFRSRAPNFGLKYDNYKDFDIHIHVPAGAIPKDGPSAGCALFTTIVSLMTKIPVHRTVAMTGEITLRGNVLPIGGLKEKLLAASRGGIKTVLIPEENVKDLKDIPPNIKENLEIISVSNIDQVLKHALVEMPINKGLSYDL</sequence>
<proteinExistence type="inferred from homology"/>
<keyword id="KW-0067">ATP-binding</keyword>
<keyword id="KW-0963">Cytoplasm</keyword>
<keyword id="KW-0378">Hydrolase</keyword>
<keyword id="KW-0547">Nucleotide-binding</keyword>
<keyword id="KW-0645">Protease</keyword>
<keyword id="KW-0720">Serine protease</keyword>
<keyword id="KW-0346">Stress response</keyword>
<accession>Q68WS8</accession>
<feature type="chain" id="PRO_0000280894" description="Lon protease">
    <location>
        <begin position="1"/>
        <end position="784"/>
    </location>
</feature>
<feature type="domain" description="Lon N-terminal" evidence="3">
    <location>
        <begin position="6"/>
        <end position="207"/>
    </location>
</feature>
<feature type="domain" description="Lon proteolytic" evidence="2">
    <location>
        <begin position="592"/>
        <end position="773"/>
    </location>
</feature>
<feature type="active site" evidence="1">
    <location>
        <position position="679"/>
    </location>
</feature>
<feature type="active site" evidence="1">
    <location>
        <position position="722"/>
    </location>
</feature>
<feature type="binding site" evidence="1">
    <location>
        <begin position="356"/>
        <end position="363"/>
    </location>
    <ligand>
        <name>ATP</name>
        <dbReference type="ChEBI" id="CHEBI:30616"/>
    </ligand>
</feature>
<protein>
    <recommendedName>
        <fullName evidence="1">Lon protease</fullName>
        <ecNumber evidence="1">3.4.21.53</ecNumber>
    </recommendedName>
    <alternativeName>
        <fullName evidence="1">ATP-dependent protease La</fullName>
    </alternativeName>
</protein>